<gene>
    <name type="ORF">ORF1/ORF2</name>
</gene>
<accession>P29154</accession>
<comment type="function">
    <text evidence="1">RNA-dependent RNA polymerase that plays an essential role in virus replication.</text>
</comment>
<comment type="catalytic activity">
    <reaction evidence="3">
        <text>RNA(n) + a ribonucleoside 5'-triphosphate = RNA(n+1) + diphosphate</text>
        <dbReference type="Rhea" id="RHEA:21248"/>
        <dbReference type="Rhea" id="RHEA-COMP:14527"/>
        <dbReference type="Rhea" id="RHEA-COMP:17342"/>
        <dbReference type="ChEBI" id="CHEBI:33019"/>
        <dbReference type="ChEBI" id="CHEBI:61557"/>
        <dbReference type="ChEBI" id="CHEBI:140395"/>
        <dbReference type="EC" id="2.7.7.48"/>
    </reaction>
</comment>
<comment type="subcellular location">
    <molecule>Protein P1-P2</molecule>
    <subcellularLocation>
        <location evidence="6">Membrane</location>
        <topology evidence="6">Multi-pass membrane protein</topology>
    </subcellularLocation>
</comment>
<comment type="alternative products">
    <event type="ribosomal frameshifting"/>
    <isoform>
        <id>P29154-1</id>
        <name>RNA-directed RNA polymerase</name>
        <sequence type="displayed"/>
    </isoform>
    <isoform>
        <id>Q84710-1</id>
        <name>Protein P1</name>
        <sequence type="external"/>
    </isoform>
</comment>
<comment type="PTM">
    <text evidence="1 6">Specific enzymatic cleavages in vivo yield mature proteins. The protease probably cleaves itself and releases the RdRp (Potential). Cleavages have been shown in the P1 protein, but since the N-terminus containing the serine protease is shared between P1 and P1-P2, cleavages should also occur within the P1-P2 protein (By similarity).</text>
</comment>
<comment type="miscellaneous">
    <molecule>Isoform RNA-directed RNA polymerase</molecule>
    <text>Produced by -1 ribosomal frameshifting between codons 589 and 590.</text>
</comment>
<comment type="similarity">
    <text evidence="6">Belongs to the luteoviruses RNA polymerase family.</text>
</comment>
<comment type="sequence caution" evidence="6">
    <conflict type="miscellaneous discrepancy">
        <sequence resource="EMBL-CDS" id="AAA72297"/>
    </conflict>
    <text>Ribosomal frameshifting not described. Translation N-terminally extended.</text>
</comment>
<feature type="signal peptide" evidence="2">
    <location>
        <begin position="1"/>
        <end position="33"/>
    </location>
</feature>
<feature type="chain" id="PRO_0000222401" description="Protein P1-P2">
    <location>
        <begin position="34"/>
        <end position="1181"/>
    </location>
</feature>
<feature type="chain" id="PRO_0000390909" description="Serine protease" evidence="2">
    <location>
        <begin position="316"/>
        <end position="515"/>
    </location>
</feature>
<feature type="chain" id="PRO_0000390910" description="RNA-directed RNA polymerase" evidence="2">
    <location>
        <begin position="516"/>
        <end position="1181"/>
    </location>
</feature>
<feature type="transmembrane region" description="Helical" evidence="2">
    <location>
        <begin position="172"/>
        <end position="192"/>
    </location>
</feature>
<feature type="transmembrane region" description="Helical" evidence="2">
    <location>
        <begin position="194"/>
        <end position="214"/>
    </location>
</feature>
<feature type="transmembrane region" description="Helical" evidence="2">
    <location>
        <begin position="218"/>
        <end position="235"/>
    </location>
</feature>
<feature type="transmembrane region" description="Helical" evidence="2">
    <location>
        <begin position="240"/>
        <end position="260"/>
    </location>
</feature>
<feature type="domain" description="Peptidase S39" evidence="4">
    <location>
        <begin position="318"/>
        <end position="515"/>
    </location>
</feature>
<feature type="domain" description="RdRp catalytic" evidence="3">
    <location>
        <begin position="979"/>
        <end position="1094"/>
    </location>
</feature>
<feature type="region of interest" description="Disordered" evidence="5">
    <location>
        <begin position="572"/>
        <end position="688"/>
    </location>
</feature>
<feature type="compositionally biased region" description="Basic and acidic residues" evidence="5">
    <location>
        <begin position="598"/>
        <end position="608"/>
    </location>
</feature>
<feature type="compositionally biased region" description="Basic and acidic residues" evidence="5">
    <location>
        <begin position="638"/>
        <end position="648"/>
    </location>
</feature>
<feature type="compositionally biased region" description="Polar residues" evidence="5">
    <location>
        <begin position="649"/>
        <end position="677"/>
    </location>
</feature>
<feature type="active site" description="For protease activity" evidence="4">
    <location>
        <position position="366"/>
    </location>
</feature>
<feature type="active site" description="For protease activity" evidence="4">
    <location>
        <position position="396"/>
    </location>
</feature>
<feature type="active site" description="For protease activity" evidence="4">
    <location>
        <position position="465"/>
    </location>
</feature>
<feature type="sequence variant">
    <original>G</original>
    <variation>S</variation>
    <location>
        <position position="648"/>
    </location>
</feature>
<feature type="sequence variant">
    <original>Q</original>
    <variation>P</variation>
    <location>
        <position position="660"/>
    </location>
</feature>
<feature type="sequence variant">
    <original>S</original>
    <variation>I</variation>
    <location>
        <position position="666"/>
    </location>
</feature>
<feature type="sequence variant">
    <original>T</original>
    <variation>I</variation>
    <location>
        <position position="675"/>
    </location>
</feature>
<feature type="sequence variant">
    <original>R</original>
    <variation>G</variation>
    <location>
        <position position="677"/>
    </location>
</feature>
<feature type="sequence variant">
    <original>R</original>
    <variation>H</variation>
    <location>
        <position position="686"/>
    </location>
</feature>
<feature type="sequence variant">
    <original>V</original>
    <variation>L</variation>
    <location>
        <position position="918"/>
    </location>
</feature>
<feature type="sequence variant">
    <original>I</original>
    <variation>K</variation>
    <location>
        <position position="941"/>
    </location>
</feature>
<feature type="sequence variant">
    <original>S</original>
    <variation>F</variation>
    <location>
        <position position="992"/>
    </location>
</feature>
<name>RDRP_PEMVW</name>
<organismHost>
    <name type="scientific">Cicer arietinum</name>
    <name type="common">Chickpea</name>
    <name type="synonym">Garbanzo</name>
    <dbReference type="NCBI Taxonomy" id="3827"/>
</organismHost>
<organismHost>
    <name type="scientific">Lathyrus odoratus</name>
    <name type="common">Sweet pea</name>
    <dbReference type="NCBI Taxonomy" id="3859"/>
</organismHost>
<organismHost>
    <name type="scientific">Lens culinaris</name>
    <name type="common">Lentil</name>
    <name type="synonym">Cicer lens</name>
    <dbReference type="NCBI Taxonomy" id="3864"/>
</organismHost>
<organismHost>
    <name type="scientific">Medicago arabica</name>
    <dbReference type="NCBI Taxonomy" id="70936"/>
</organismHost>
<organismHost>
    <name type="scientific">Pisum sativum</name>
    <name type="common">Garden pea</name>
    <name type="synonym">Lathyrus oleraceus</name>
    <dbReference type="NCBI Taxonomy" id="3888"/>
</organismHost>
<organismHost>
    <name type="scientific">Trifolium incarnatum</name>
    <name type="common">Crimson clover</name>
    <dbReference type="NCBI Taxonomy" id="60916"/>
</organismHost>
<organismHost>
    <name type="scientific">Vicia faba</name>
    <name type="common">Broad bean</name>
    <name type="synonym">Faba vulgaris</name>
    <dbReference type="NCBI Taxonomy" id="3906"/>
</organismHost>
<organismHost>
    <name type="scientific">Vicia sativa</name>
    <name type="common">Spring vetch</name>
    <name type="synonym">Tare</name>
    <dbReference type="NCBI Taxonomy" id="3908"/>
</organismHost>
<organism>
    <name type="scientific">Pea enation mosaic virus-1 (strain WSG)</name>
    <name type="common">PEMV-1</name>
    <dbReference type="NCBI Taxonomy" id="693989"/>
    <lineage>
        <taxon>Viruses</taxon>
        <taxon>Riboviria</taxon>
        <taxon>Orthornavirae</taxon>
        <taxon>Pisuviricota</taxon>
        <taxon>Pisoniviricetes</taxon>
        <taxon>Sobelivirales</taxon>
        <taxon>Solemoviridae</taxon>
        <taxon>Enamovirus</taxon>
        <taxon>Pea enation mosaic virus-1</taxon>
    </lineage>
</organism>
<dbReference type="EC" id="3.4.21.-"/>
<dbReference type="EC" id="2.7.7.48"/>
<dbReference type="EMBL" id="L04573">
    <property type="protein sequence ID" value="AAA72297.1"/>
    <property type="status" value="ALT_SEQ"/>
    <property type="molecule type" value="Genomic_RNA"/>
</dbReference>
<dbReference type="PIR" id="JQ1384">
    <property type="entry name" value="RRXBPM"/>
</dbReference>
<dbReference type="Proteomes" id="UP000000519">
    <property type="component" value="Segment"/>
</dbReference>
<dbReference type="GO" id="GO:0016020">
    <property type="term" value="C:membrane"/>
    <property type="evidence" value="ECO:0007669"/>
    <property type="project" value="UniProtKB-SubCell"/>
</dbReference>
<dbReference type="GO" id="GO:0000166">
    <property type="term" value="F:nucleotide binding"/>
    <property type="evidence" value="ECO:0007669"/>
    <property type="project" value="UniProtKB-KW"/>
</dbReference>
<dbReference type="GO" id="GO:0003723">
    <property type="term" value="F:RNA binding"/>
    <property type="evidence" value="ECO:0007669"/>
    <property type="project" value="InterPro"/>
</dbReference>
<dbReference type="GO" id="GO:0003968">
    <property type="term" value="F:RNA-directed RNA polymerase activity"/>
    <property type="evidence" value="ECO:0007669"/>
    <property type="project" value="UniProtKB-KW"/>
</dbReference>
<dbReference type="GO" id="GO:0004252">
    <property type="term" value="F:serine-type endopeptidase activity"/>
    <property type="evidence" value="ECO:0007669"/>
    <property type="project" value="InterPro"/>
</dbReference>
<dbReference type="GO" id="GO:0006351">
    <property type="term" value="P:DNA-templated transcription"/>
    <property type="evidence" value="ECO:0007669"/>
    <property type="project" value="InterPro"/>
</dbReference>
<dbReference type="GO" id="GO:0006508">
    <property type="term" value="P:proteolysis"/>
    <property type="evidence" value="ECO:0007669"/>
    <property type="project" value="UniProtKB-KW"/>
</dbReference>
<dbReference type="GO" id="GO:0039694">
    <property type="term" value="P:viral RNA genome replication"/>
    <property type="evidence" value="ECO:0007669"/>
    <property type="project" value="InterPro"/>
</dbReference>
<dbReference type="GO" id="GO:0075523">
    <property type="term" value="P:viral translational frameshifting"/>
    <property type="evidence" value="ECO:0007669"/>
    <property type="project" value="UniProtKB-KW"/>
</dbReference>
<dbReference type="InterPro" id="IPR043502">
    <property type="entry name" value="DNA/RNA_pol_sf"/>
</dbReference>
<dbReference type="InterPro" id="IPR000382">
    <property type="entry name" value="Peptidase_S39B_luteovirus"/>
</dbReference>
<dbReference type="InterPro" id="IPR001795">
    <property type="entry name" value="RNA-dir_pol_luteovirus"/>
</dbReference>
<dbReference type="InterPro" id="IPR007094">
    <property type="entry name" value="RNA-dir_pol_PSvirus"/>
</dbReference>
<dbReference type="Pfam" id="PF02122">
    <property type="entry name" value="Peptidase_S39"/>
    <property type="match status" value="1"/>
</dbReference>
<dbReference type="Pfam" id="PF02123">
    <property type="entry name" value="RdRP_4"/>
    <property type="match status" value="1"/>
</dbReference>
<dbReference type="PRINTS" id="PR00914">
    <property type="entry name" value="LVIRUSRNAPOL"/>
</dbReference>
<dbReference type="SUPFAM" id="SSF56672">
    <property type="entry name" value="DNA/RNA polymerases"/>
    <property type="match status" value="1"/>
</dbReference>
<dbReference type="PROSITE" id="PS51868">
    <property type="entry name" value="PEPTIDASE_S39"/>
    <property type="match status" value="1"/>
</dbReference>
<dbReference type="PROSITE" id="PS50507">
    <property type="entry name" value="RDRP_SSRNA_POS"/>
    <property type="match status" value="1"/>
</dbReference>
<sequence length="1181" mass="131890">MASFLKPVNSQGLWLSLLLAITYLFLLPSAGQSLDPSGIGLAAGCSQSQGGISSFAALPRPCNDSVCTLPDLGWSCQRTAQDTANQQQSPFNHTGHFLTTSGWTWPNWTCSPSQCQLLIHLPTWQIVKQDFLLLLKEWDLLTMCQRCSDLLTKTPGFILRFAGETLILVANLIEFVLVSWSLWLCSVLVYVAQAVPGKFLLYMAAFCTTFWAWPRETASSLIRIVTTPLTLIGFLNKTGIGLISHCLALTWNMFMTWSLLPWVTLMKMMKILITSSRVLTRSGRPKRTSSKSLKHKLKISRAIQKKQGKKTPVEERTIPGVQIKKLREDPPKGVILRCTDQFGDHVGYASAVKLEKGQTGIVLPIHVWTDTVYINGPNGKLKMADFTALYEVTNHDSLIMTSAMAGWGSILGVRPRPLTTIDAVKLKNYSLFTERDGKWYVQAAKCIAPAEGMFRVVSDTRPGDSGLPLFDMKMNVVAVHRGTWPSERFPENRAFAILPVPDLTSSSSPKFTGCETYSEAETAYEMADNFSDGEEILIRTKGQSYRTFIGSNKVALLSIRKLEEELSRGPIGLWADDTEDDESAPRRSGKRIIPVDSGETKSSEDPLPKGRGVSSTPSRSKSRKGKACPSFRNDAGTEESRQPQEEKGQSCQEDSLNSTQEIQGQSTHFVPSSGTGRKSCESSPHRPTTKITSIFEDFYRWKEPREEAPGFNSVGSCPFTVYKCPPKGLSSWGERVARTSAFLQACTEKYSWPETGAEAELSSLRYQAARRQSAQTTAVIPPKDVREDLIKRTTEAYRSTALPAPMWAHNFDESHMRFEFWECVRKLKGQAGSGVPYAAFSGRKTNDKWVFDHESTEDLWETVRDRLFRLLNQDFIDPVQAVKDGLVDPIRLFVKLEPHKMEKIRNKRYRLIASVSIVDQLVARMLFRDQNEEELLQHMAIPSKPGLGFSQDHQVLAFTESVAALAGTSAQDLVDNWSRYLTPTDCSGFDWSVPMWLLEDDLAVRNELTLGLPHGLRKMRETWLKCLGQSVFCLSNGLLLAQTSPGIQKSGSFNTSSTNSRMRYMLALYAGASWAVTMGDDALESVGSDLSQYARLGIKCERAEEFDFCSHLFRAPDVVIPKNLEKMVYGLLSGTSPESPLLADRFSWLSALQSILEEMRHMPQDFVNMLIEHLGVGDLVE</sequence>
<keyword id="KW-0378">Hydrolase</keyword>
<keyword id="KW-0472">Membrane</keyword>
<keyword id="KW-0511">Multifunctional enzyme</keyword>
<keyword id="KW-0547">Nucleotide-binding</keyword>
<keyword id="KW-0548">Nucleotidyltransferase</keyword>
<keyword id="KW-0645">Protease</keyword>
<keyword id="KW-1185">Reference proteome</keyword>
<keyword id="KW-0688">Ribosomal frameshifting</keyword>
<keyword id="KW-1159">RNA suppression of termination</keyword>
<keyword id="KW-0696">RNA-directed RNA polymerase</keyword>
<keyword id="KW-0720">Serine protease</keyword>
<keyword id="KW-0732">Signal</keyword>
<keyword id="KW-0808">Transferase</keyword>
<keyword id="KW-0812">Transmembrane</keyword>
<keyword id="KW-1133">Transmembrane helix</keyword>
<keyword id="KW-0693">Viral RNA replication</keyword>
<evidence type="ECO:0000250" key="1"/>
<evidence type="ECO:0000255" key="2"/>
<evidence type="ECO:0000255" key="3">
    <source>
        <dbReference type="PROSITE-ProRule" id="PRU00539"/>
    </source>
</evidence>
<evidence type="ECO:0000255" key="4">
    <source>
        <dbReference type="PROSITE-ProRule" id="PRU01216"/>
    </source>
</evidence>
<evidence type="ECO:0000256" key="5">
    <source>
        <dbReference type="SAM" id="MobiDB-lite"/>
    </source>
</evidence>
<evidence type="ECO:0000305" key="6"/>
<protein>
    <recommendedName>
        <fullName>Protein P1-P2</fullName>
    </recommendedName>
    <component>
        <recommendedName>
            <fullName>Serine protease</fullName>
            <ecNumber>3.4.21.-</ecNumber>
        </recommendedName>
    </component>
    <component>
        <recommendedName>
            <fullName>RNA-directed RNA polymerase</fullName>
            <ecNumber>2.7.7.48</ecNumber>
        </recommendedName>
    </component>
</protein>
<proteinExistence type="inferred from homology"/>
<reference key="1">
    <citation type="journal article" date="1991" name="J. Gen. Virol.">
        <title>The nucleotide sequence and luteovirus-like nature of RNA 1 of an aphid non-transmissible strain of pea enation mosaic virus.</title>
        <authorList>
            <person name="Demler S.A."/>
            <person name="de Zoeten G.A."/>
        </authorList>
    </citation>
    <scope>NUCLEOTIDE SEQUENCE [GENOMIC RNA]</scope>
</reference>